<reference key="1">
    <citation type="journal article" date="1989" name="J. Bacteriol.">
        <title>The 5'-flanking region of the gene encoding the large subunit of ribulose-1,5-bisphosphate carboxylase/oxygenase is crucial for growth of the cyanobacterium Synechococcus sp. strain PCC 7942 at the level of CO2 in air.</title>
        <authorList>
            <person name="Friedberg D."/>
            <person name="Kaplan A."/>
            <person name="Ariel R."/>
            <person name="Kessel M."/>
            <person name="Seijffers J."/>
        </authorList>
    </citation>
    <scope>NUCLEOTIDE SEQUENCE [GENOMIC DNA]</scope>
    <scope>FUNCTION</scope>
    <scope>DISRUPTION PHENOTYPE</scope>
    <scope>VARIANT HCRO221 ASP-146</scope>
    <source>
        <strain>ATCC 33912 / PCC 7942 / FACHB-805</strain>
    </source>
</reference>
<reference key="2">
    <citation type="submission" date="2005-08" db="EMBL/GenBank/DDBJ databases">
        <title>Complete sequence of chromosome 1 of Synechococcus elongatus PCC 7942.</title>
        <authorList>
            <consortium name="US DOE Joint Genome Institute"/>
            <person name="Copeland A."/>
            <person name="Lucas S."/>
            <person name="Lapidus A."/>
            <person name="Barry K."/>
            <person name="Detter J.C."/>
            <person name="Glavina T."/>
            <person name="Hammon N."/>
            <person name="Israni S."/>
            <person name="Pitluck S."/>
            <person name="Schmutz J."/>
            <person name="Larimer F."/>
            <person name="Land M."/>
            <person name="Kyrpides N."/>
            <person name="Lykidis A."/>
            <person name="Golden S."/>
            <person name="Richardson P."/>
        </authorList>
    </citation>
    <scope>NUCLEOTIDE SEQUENCE [LARGE SCALE GENOMIC DNA]</scope>
    <source>
        <strain>ATCC 33912 / PCC 7942 / FACHB-805</strain>
    </source>
</reference>
<reference key="3">
    <citation type="journal article" date="2012" name="J. Biol. Chem.">
        <title>Elucidating essential role of conserved carboxysomal protein CcmN reveals common feature of bacterial microcompartment assembly.</title>
        <authorList>
            <person name="Kinney J.N."/>
            <person name="Salmeen A."/>
            <person name="Cai F."/>
            <person name="Kerfeld C.A."/>
        </authorList>
    </citation>
    <scope>INTERACTION WITH CCMM AND CCMK2</scope>
    <scope>SUBCELLULAR LOCATION</scope>
    <scope>DOMAIN</scope>
    <scope>DISRUPTION PHENOTYPE</scope>
    <scope>MUTAGENESIS OF 123-VAL--ARG-161 AND 143-LYS--ARG-161</scope>
    <source>
        <strain>ATCC 33912 / PCC 7942 / FACHB-805</strain>
    </source>
</reference>
<reference key="4">
    <citation type="journal article" date="2013" name="Cell">
        <title>Biogenesis of a bacterial organelle: the carboxysome assembly pathway.</title>
        <authorList>
            <person name="Cameron J.C."/>
            <person name="Wilson S.C."/>
            <person name="Bernstein S.L."/>
            <person name="Kerfeld C.A."/>
        </authorList>
    </citation>
    <scope>CARBOXYSOME ASSEMBLY PROCESS</scope>
    <scope>FUNCTION</scope>
    <scope>SUBCELLULAR LOCATION</scope>
    <scope>DISRUPTION PHENOTYPE</scope>
    <source>
        <strain>ATCC 33912 / PCC 7942 / FACHB-805</strain>
    </source>
</reference>
<reference key="5">
    <citation type="journal article" date="2018" name="Front. Plant Sci.">
        <title>Engineering and Modulating Functional Cyanobacterial CO2-Fixing Organelles.</title>
        <authorList>
            <person name="Fang Y."/>
            <person name="Huang F."/>
            <person name="Faulkner M."/>
            <person name="Jiang Q."/>
            <person name="Dykes G.F."/>
            <person name="Yang M."/>
            <person name="Liu L.N."/>
        </authorList>
    </citation>
    <scope>BIOTECHNOLOGY</scope>
    <source>
        <strain>ATCC 33912 / PCC 7942 / FACHB-805</strain>
    </source>
</reference>
<reference key="6">
    <citation type="journal article" date="2019" name="Plant Cell">
        <title>Single-Organelle Quantification Reveals Stoichiometric and Structural Variability of Carboxysomes Dependent on the Environment.</title>
        <authorList>
            <person name="Sun Y."/>
            <person name="Wollman A.J.M."/>
            <person name="Huang F."/>
            <person name="Leake M.C."/>
            <person name="Liu L.N."/>
        </authorList>
    </citation>
    <scope>SUBCELLULAR LOCATION</scope>
    <scope>INDUCTION</scope>
    <source>
        <strain>ATCC 33912 / PCC 7942 / FACHB-805</strain>
    </source>
</reference>
<gene>
    <name evidence="7" type="primary">ccmN</name>
    <name type="ordered locus">Synpcc7942_1424</name>
</gene>
<name>CCMN_SYNE7</name>
<protein>
    <recommendedName>
        <fullName evidence="9">Carboxysome assembly protein CcmN</fullName>
    </recommendedName>
    <alternativeName>
        <fullName>Carbon dioxide concentrating mechanism protein CcmN</fullName>
    </alternativeName>
    <alternativeName>
        <fullName evidence="8">ORF I</fullName>
    </alternativeName>
</protein>
<keyword id="KW-0002">3D-structure</keyword>
<keyword id="KW-1283">Bacterial microcompartment</keyword>
<keyword id="KW-0120">Carbon dioxide fixation</keyword>
<keyword id="KW-1282">Carboxysome</keyword>
<keyword id="KW-0602">Photosynthesis</keyword>
<keyword id="KW-1185">Reference proteome</keyword>
<feature type="chain" id="PRO_0000066463" description="Carboxysome assembly protein CcmN">
    <location>
        <begin position="1"/>
        <end position="161"/>
    </location>
</feature>
<feature type="region of interest" description="Disordered" evidence="1">
    <location>
        <begin position="111"/>
        <end position="140"/>
    </location>
</feature>
<feature type="short sequence motif" description="Encapsulation peptide" evidence="2">
    <location>
        <begin position="144"/>
        <end position="161"/>
    </location>
</feature>
<feature type="compositionally biased region" description="Polar residues" evidence="1">
    <location>
        <begin position="116"/>
        <end position="137"/>
    </location>
</feature>
<feature type="sequence variant" description="In hcrO221, requires high CO2 levels for growth." evidence="4">
    <original>G</original>
    <variation>D</variation>
    <location>
        <position position="146"/>
    </location>
</feature>
<feature type="mutagenesis site" description="Interacts with CcmM." evidence="2">
    <location>
        <begin position="123"/>
        <end position="161"/>
    </location>
</feature>
<feature type="mutagenesis site" description="Does not grow in normal air, forms polar masses of protein larger than carboxysomes. Interacts with CcmM, does not interact with CcmK2." evidence="2">
    <location>
        <begin position="143"/>
        <end position="161"/>
    </location>
</feature>
<feature type="strand" evidence="11">
    <location>
        <begin position="15"/>
        <end position="22"/>
    </location>
</feature>
<feature type="strand" evidence="11">
    <location>
        <begin position="24"/>
        <end position="28"/>
    </location>
</feature>
<feature type="strand" evidence="11">
    <location>
        <begin position="33"/>
        <end position="36"/>
    </location>
</feature>
<feature type="strand" evidence="11">
    <location>
        <begin position="41"/>
        <end position="44"/>
    </location>
</feature>
<feature type="strand" evidence="11">
    <location>
        <begin position="46"/>
        <end position="50"/>
    </location>
</feature>
<feature type="strand" evidence="11">
    <location>
        <begin position="55"/>
        <end position="65"/>
    </location>
</feature>
<feature type="strand" evidence="11">
    <location>
        <begin position="76"/>
        <end position="83"/>
    </location>
</feature>
<feature type="strand" evidence="11">
    <location>
        <begin position="94"/>
        <end position="97"/>
    </location>
</feature>
<feature type="strand" evidence="11">
    <location>
        <begin position="111"/>
        <end position="113"/>
    </location>
</feature>
<accession>P46204</accession>
<accession>Q31NB5</accession>
<comment type="function">
    <text evidence="2 4">Required for carboxysome formation; the N-terminus interacts with CcmM which itself binds RuBisCO (ribulose bisphosphate carboxylase, rbcL-rbcS), while the C-terminal 18 residues interact with carboxysome shell protein CcmK2 (PubMed:22461622). Required for growth in normal air (PubMed:2509426).</text>
</comment>
<comment type="function">
    <text evidence="3">Beta-carboxysome assembly initiates when soluble RuBisCO is condensed into a liquid matrix in a pre-carboxysome by the RbcS-like domains of probably both CcmM58 and CcmM35. CcmN interacts with the N-terminus of CcmM58, and then recruits the CcmK2 major shell protein via CcmN's encapsulation peptide. Shell formation requires CcmK proteins and CcmO. CcmL caps the otherwise elongated carboxysome. Once fully encapsulated carboxysomes are formed, they migrate within the cell probably via interactions with the cytoskeleton.</text>
</comment>
<comment type="subunit">
    <text evidence="2">Interacts with CcmM via the N-terminus of CcmN. Interacts with CcmK2 via the 18 C-terminal residues.</text>
</comment>
<comment type="subcellular location">
    <subcellularLocation>
        <location evidence="2 6 10">Carboxysome</location>
    </subcellularLocation>
    <text evidence="2">This cyanobacterium makes beta-type carboxysomes.</text>
</comment>
<comment type="induction">
    <text evidence="6">Carboxysome size and components vary with growth conditions. When grown in ambient air at medium light (50 uE meter(-2) second(-1)) there are 74 units of this protein per carboxysome, the numbers decrease under low light and high CO(2), and increase under high light (at protein level).</text>
</comment>
<comment type="domain">
    <text evidence="2">The N-terminus interacts with CcmM, while the 18 C-terminal residues (encapsulation peptide) are required for interaction with the hexameric shell proteins (CcmK2) and are predicted to form a helix. The 2 regions are separated by a linker.</text>
</comment>
<comment type="disruption phenotype">
    <text evidence="2 3 4">Cells with a disrupted or mutated protein do not have carboxysomes, instead have less dense inclusions, do not grow in normal air (PubMed:2509426). Targeted disruption do not grow normally in air but have wild-type growth in 3% CO(2), called a high-CO(2) requiring phenotype, HCR. Cells have a single polar aggregate instead of carboxysomes; RuBisCO localizes to polar spots consistent with the polar aggregates (PubMed:22461622, PubMed:24267892).</text>
</comment>
<comment type="biotechnology">
    <text evidence="5">Heterologous expression of 12 carboxysomal genes in E.coli (ccaA, ccmK2, ccmK3, ccmK4, ccmL, ccmM, ccmN, ccmO, ccmP, rbcL, rbcS, rbcX) leads to the formation of bodies that resemble carboxysomes, have densely packed paracrystalline arrays and RuBisCO activity. These structures open the door to generating carboxysomes in plant cells to increase their photosynthesis and productivity, as well as tailoring bacterial microcompartments to specific metabolic needs and molecule delivery.</text>
</comment>
<comment type="similarity">
    <text evidence="9">Belongs to the CcmN family.</text>
</comment>
<dbReference type="EMBL" id="M30808">
    <property type="protein sequence ID" value="AAA27326.1"/>
    <property type="molecule type" value="Genomic_DNA"/>
</dbReference>
<dbReference type="EMBL" id="CP000100">
    <property type="protein sequence ID" value="ABB57454.1"/>
    <property type="molecule type" value="Genomic_DNA"/>
</dbReference>
<dbReference type="RefSeq" id="WP_011242446.1">
    <property type="nucleotide sequence ID" value="NZ_JACJTX010000004.1"/>
</dbReference>
<dbReference type="PDB" id="7D6C">
    <property type="method" value="X-ray"/>
    <property type="resolution" value="2.89 A"/>
    <property type="chains" value="3/4/5/F=1-118"/>
</dbReference>
<dbReference type="PDBsum" id="7D6C"/>
<dbReference type="SMR" id="P46204"/>
<dbReference type="STRING" id="1140.Synpcc7942_1424"/>
<dbReference type="PaxDb" id="1140-Synpcc7942_1424"/>
<dbReference type="KEGG" id="syf:Synpcc7942_1424"/>
<dbReference type="eggNOG" id="COG0663">
    <property type="taxonomic scope" value="Bacteria"/>
</dbReference>
<dbReference type="HOGENOM" id="CLU_069354_0_0_3"/>
<dbReference type="OrthoDB" id="481965at2"/>
<dbReference type="BioCyc" id="SYNEL:SYNPCC7942_1424-MONOMER"/>
<dbReference type="Proteomes" id="UP000889800">
    <property type="component" value="Chromosome"/>
</dbReference>
<dbReference type="GO" id="GO:0031470">
    <property type="term" value="C:carboxysome"/>
    <property type="evidence" value="ECO:0000314"/>
    <property type="project" value="UniProtKB"/>
</dbReference>
<dbReference type="GO" id="GO:0043886">
    <property type="term" value="F:structural constituent of carboxysome shell"/>
    <property type="evidence" value="ECO:0000315"/>
    <property type="project" value="UniProtKB"/>
</dbReference>
<dbReference type="GO" id="GO:0015977">
    <property type="term" value="P:carbon fixation"/>
    <property type="evidence" value="ECO:0007669"/>
    <property type="project" value="UniProtKB-KW"/>
</dbReference>
<dbReference type="GO" id="GO:0015979">
    <property type="term" value="P:photosynthesis"/>
    <property type="evidence" value="ECO:0007669"/>
    <property type="project" value="UniProtKB-KW"/>
</dbReference>
<dbReference type="Gene3D" id="2.160.10.10">
    <property type="entry name" value="Hexapeptide repeat proteins"/>
    <property type="match status" value="1"/>
</dbReference>
<dbReference type="InterPro" id="IPR011004">
    <property type="entry name" value="Trimer_LpxA-like_sf"/>
</dbReference>
<dbReference type="SUPFAM" id="SSF51161">
    <property type="entry name" value="Trimeric LpxA-like enzymes"/>
    <property type="match status" value="1"/>
</dbReference>
<sequence>MHLPPLEPPISDRYFASGEVTIAADVVIAPGVLLIAEADSRIEIASGVCIGLGSVIHARGGAIIIQAGALLAAGVLIVGQSIVGRQACLGASTTLVNTSIEAGGVTAPGSLLSAETPPTTATVSSSEPAGRSPQSSAIAHPTKVYGKEQFLRMRQSMFPDR</sequence>
<evidence type="ECO:0000256" key="1">
    <source>
        <dbReference type="SAM" id="MobiDB-lite"/>
    </source>
</evidence>
<evidence type="ECO:0000269" key="2">
    <source>
    </source>
</evidence>
<evidence type="ECO:0000269" key="3">
    <source>
    </source>
</evidence>
<evidence type="ECO:0000269" key="4">
    <source>
    </source>
</evidence>
<evidence type="ECO:0000269" key="5">
    <source>
    </source>
</evidence>
<evidence type="ECO:0000269" key="6">
    <source>
    </source>
</evidence>
<evidence type="ECO:0000303" key="7">
    <source>
    </source>
</evidence>
<evidence type="ECO:0000303" key="8">
    <source>
    </source>
</evidence>
<evidence type="ECO:0000305" key="9"/>
<evidence type="ECO:0000305" key="10">
    <source>
    </source>
</evidence>
<evidence type="ECO:0007829" key="11">
    <source>
        <dbReference type="PDB" id="7D6C"/>
    </source>
</evidence>
<organism>
    <name type="scientific">Synechococcus elongatus (strain ATCC 33912 / PCC 7942 / FACHB-805)</name>
    <name type="common">Anacystis nidulans R2</name>
    <dbReference type="NCBI Taxonomy" id="1140"/>
    <lineage>
        <taxon>Bacteria</taxon>
        <taxon>Bacillati</taxon>
        <taxon>Cyanobacteriota</taxon>
        <taxon>Cyanophyceae</taxon>
        <taxon>Synechococcales</taxon>
        <taxon>Synechococcaceae</taxon>
        <taxon>Synechococcus</taxon>
    </lineage>
</organism>
<proteinExistence type="evidence at protein level"/>